<accession>Q9STJ8</accession>
<accession>Q3E7L1</accession>
<organism>
    <name type="scientific">Arabidopsis thaliana</name>
    <name type="common">Mouse-ear cress</name>
    <dbReference type="NCBI Taxonomy" id="3702"/>
    <lineage>
        <taxon>Eukaryota</taxon>
        <taxon>Viridiplantae</taxon>
        <taxon>Streptophyta</taxon>
        <taxon>Embryophyta</taxon>
        <taxon>Tracheophyta</taxon>
        <taxon>Spermatophyta</taxon>
        <taxon>Magnoliopsida</taxon>
        <taxon>eudicotyledons</taxon>
        <taxon>Gunneridae</taxon>
        <taxon>Pentapetalae</taxon>
        <taxon>rosids</taxon>
        <taxon>malvids</taxon>
        <taxon>Brassicales</taxon>
        <taxon>Brassicaceae</taxon>
        <taxon>Camelineae</taxon>
        <taxon>Arabidopsis</taxon>
    </lineage>
</organism>
<reference key="1">
    <citation type="journal article" date="1999" name="Nature">
        <title>Sequence and analysis of chromosome 4 of the plant Arabidopsis thaliana.</title>
        <authorList>
            <person name="Mayer K.F.X."/>
            <person name="Schueller C."/>
            <person name="Wambutt R."/>
            <person name="Murphy G."/>
            <person name="Volckaert G."/>
            <person name="Pohl T."/>
            <person name="Duesterhoeft A."/>
            <person name="Stiekema W."/>
            <person name="Entian K.-D."/>
            <person name="Terryn N."/>
            <person name="Harris B."/>
            <person name="Ansorge W."/>
            <person name="Brandt P."/>
            <person name="Grivell L.A."/>
            <person name="Rieger M."/>
            <person name="Weichselgartner M."/>
            <person name="de Simone V."/>
            <person name="Obermaier B."/>
            <person name="Mache R."/>
            <person name="Mueller M."/>
            <person name="Kreis M."/>
            <person name="Delseny M."/>
            <person name="Puigdomenech P."/>
            <person name="Watson M."/>
            <person name="Schmidtheini T."/>
            <person name="Reichert B."/>
            <person name="Portetelle D."/>
            <person name="Perez-Alonso M."/>
            <person name="Boutry M."/>
            <person name="Bancroft I."/>
            <person name="Vos P."/>
            <person name="Hoheisel J."/>
            <person name="Zimmermann W."/>
            <person name="Wedler H."/>
            <person name="Ridley P."/>
            <person name="Langham S.-A."/>
            <person name="McCullagh B."/>
            <person name="Bilham L."/>
            <person name="Robben J."/>
            <person name="van der Schueren J."/>
            <person name="Grymonprez B."/>
            <person name="Chuang Y.-J."/>
            <person name="Vandenbussche F."/>
            <person name="Braeken M."/>
            <person name="Weltjens I."/>
            <person name="Voet M."/>
            <person name="Bastiaens I."/>
            <person name="Aert R."/>
            <person name="Defoor E."/>
            <person name="Weitzenegger T."/>
            <person name="Bothe G."/>
            <person name="Ramsperger U."/>
            <person name="Hilbert H."/>
            <person name="Braun M."/>
            <person name="Holzer E."/>
            <person name="Brandt A."/>
            <person name="Peters S."/>
            <person name="van Staveren M."/>
            <person name="Dirkse W."/>
            <person name="Mooijman P."/>
            <person name="Klein Lankhorst R."/>
            <person name="Rose M."/>
            <person name="Hauf J."/>
            <person name="Koetter P."/>
            <person name="Berneiser S."/>
            <person name="Hempel S."/>
            <person name="Feldpausch M."/>
            <person name="Lamberth S."/>
            <person name="Van den Daele H."/>
            <person name="De Keyser A."/>
            <person name="Buysshaert C."/>
            <person name="Gielen J."/>
            <person name="Villarroel R."/>
            <person name="De Clercq R."/>
            <person name="van Montagu M."/>
            <person name="Rogers J."/>
            <person name="Cronin A."/>
            <person name="Quail M.A."/>
            <person name="Bray-Allen S."/>
            <person name="Clark L."/>
            <person name="Doggett J."/>
            <person name="Hall S."/>
            <person name="Kay M."/>
            <person name="Lennard N."/>
            <person name="McLay K."/>
            <person name="Mayes R."/>
            <person name="Pettett A."/>
            <person name="Rajandream M.A."/>
            <person name="Lyne M."/>
            <person name="Benes V."/>
            <person name="Rechmann S."/>
            <person name="Borkova D."/>
            <person name="Bloecker H."/>
            <person name="Scharfe M."/>
            <person name="Grimm M."/>
            <person name="Loehnert T.-H."/>
            <person name="Dose S."/>
            <person name="de Haan M."/>
            <person name="Maarse A.C."/>
            <person name="Schaefer M."/>
            <person name="Mueller-Auer S."/>
            <person name="Gabel C."/>
            <person name="Fuchs M."/>
            <person name="Fartmann B."/>
            <person name="Granderath K."/>
            <person name="Dauner D."/>
            <person name="Herzl A."/>
            <person name="Neumann S."/>
            <person name="Argiriou A."/>
            <person name="Vitale D."/>
            <person name="Liguori R."/>
            <person name="Piravandi E."/>
            <person name="Massenet O."/>
            <person name="Quigley F."/>
            <person name="Clabauld G."/>
            <person name="Muendlein A."/>
            <person name="Felber R."/>
            <person name="Schnabl S."/>
            <person name="Hiller R."/>
            <person name="Schmidt W."/>
            <person name="Lecharny A."/>
            <person name="Aubourg S."/>
            <person name="Chefdor F."/>
            <person name="Cooke R."/>
            <person name="Berger C."/>
            <person name="Monfort A."/>
            <person name="Casacuberta E."/>
            <person name="Gibbons T."/>
            <person name="Weber N."/>
            <person name="Vandenbol M."/>
            <person name="Bargues M."/>
            <person name="Terol J."/>
            <person name="Torres A."/>
            <person name="Perez-Perez A."/>
            <person name="Purnelle B."/>
            <person name="Bent E."/>
            <person name="Johnson S."/>
            <person name="Tacon D."/>
            <person name="Jesse T."/>
            <person name="Heijnen L."/>
            <person name="Schwarz S."/>
            <person name="Scholler P."/>
            <person name="Heber S."/>
            <person name="Francs P."/>
            <person name="Bielke C."/>
            <person name="Frishman D."/>
            <person name="Haase D."/>
            <person name="Lemcke K."/>
            <person name="Mewes H.-W."/>
            <person name="Stocker S."/>
            <person name="Zaccaria P."/>
            <person name="Bevan M."/>
            <person name="Wilson R.K."/>
            <person name="de la Bastide M."/>
            <person name="Habermann K."/>
            <person name="Parnell L."/>
            <person name="Dedhia N."/>
            <person name="Gnoj L."/>
            <person name="Schutz K."/>
            <person name="Huang E."/>
            <person name="Spiegel L."/>
            <person name="Sekhon M."/>
            <person name="Murray J."/>
            <person name="Sheet P."/>
            <person name="Cordes M."/>
            <person name="Abu-Threideh J."/>
            <person name="Stoneking T."/>
            <person name="Kalicki J."/>
            <person name="Graves T."/>
            <person name="Harmon G."/>
            <person name="Edwards J."/>
            <person name="Latreille P."/>
            <person name="Courtney L."/>
            <person name="Cloud J."/>
            <person name="Abbott A."/>
            <person name="Scott K."/>
            <person name="Johnson D."/>
            <person name="Minx P."/>
            <person name="Bentley D."/>
            <person name="Fulton B."/>
            <person name="Miller N."/>
            <person name="Greco T."/>
            <person name="Kemp K."/>
            <person name="Kramer J."/>
            <person name="Fulton L."/>
            <person name="Mardis E."/>
            <person name="Dante M."/>
            <person name="Pepin K."/>
            <person name="Hillier L.W."/>
            <person name="Nelson J."/>
            <person name="Spieth J."/>
            <person name="Ryan E."/>
            <person name="Andrews S."/>
            <person name="Geisel C."/>
            <person name="Layman D."/>
            <person name="Du H."/>
            <person name="Ali J."/>
            <person name="Berghoff A."/>
            <person name="Jones K."/>
            <person name="Drone K."/>
            <person name="Cotton M."/>
            <person name="Joshu C."/>
            <person name="Antonoiu B."/>
            <person name="Zidanic M."/>
            <person name="Strong C."/>
            <person name="Sun H."/>
            <person name="Lamar B."/>
            <person name="Yordan C."/>
            <person name="Ma P."/>
            <person name="Zhong J."/>
            <person name="Preston R."/>
            <person name="Vil D."/>
            <person name="Shekher M."/>
            <person name="Matero A."/>
            <person name="Shah R."/>
            <person name="Swaby I.K."/>
            <person name="O'Shaughnessy A."/>
            <person name="Rodriguez M."/>
            <person name="Hoffman J."/>
            <person name="Till S."/>
            <person name="Granat S."/>
            <person name="Shohdy N."/>
            <person name="Hasegawa A."/>
            <person name="Hameed A."/>
            <person name="Lodhi M."/>
            <person name="Johnson A."/>
            <person name="Chen E."/>
            <person name="Marra M.A."/>
            <person name="Martienssen R."/>
            <person name="McCombie W.R."/>
        </authorList>
    </citation>
    <scope>NUCLEOTIDE SEQUENCE [LARGE SCALE GENOMIC DNA]</scope>
    <source>
        <strain>cv. Columbia</strain>
    </source>
</reference>
<reference key="2">
    <citation type="journal article" date="2017" name="Plant J.">
        <title>Araport11: a complete reannotation of the Arabidopsis thaliana reference genome.</title>
        <authorList>
            <person name="Cheng C.Y."/>
            <person name="Krishnakumar V."/>
            <person name="Chan A.P."/>
            <person name="Thibaud-Nissen F."/>
            <person name="Schobel S."/>
            <person name="Town C.D."/>
        </authorList>
    </citation>
    <scope>GENOME REANNOTATION</scope>
    <source>
        <strain>cv. Columbia</strain>
    </source>
</reference>
<reference key="3">
    <citation type="submission" date="2006-07" db="EMBL/GenBank/DDBJ databases">
        <title>Large-scale analysis of RIKEN Arabidopsis full-length (RAFL) cDNAs.</title>
        <authorList>
            <person name="Totoki Y."/>
            <person name="Seki M."/>
            <person name="Ishida J."/>
            <person name="Nakajima M."/>
            <person name="Enju A."/>
            <person name="Kamiya A."/>
            <person name="Narusaka M."/>
            <person name="Shin-i T."/>
            <person name="Nakagawa M."/>
            <person name="Sakamoto N."/>
            <person name="Oishi K."/>
            <person name="Kohara Y."/>
            <person name="Kobayashi M."/>
            <person name="Toyoda A."/>
            <person name="Sakaki Y."/>
            <person name="Sakurai T."/>
            <person name="Iida K."/>
            <person name="Akiyama K."/>
            <person name="Satou M."/>
            <person name="Toyoda T."/>
            <person name="Konagaya A."/>
            <person name="Carninci P."/>
            <person name="Kawai J."/>
            <person name="Hayashizaki Y."/>
            <person name="Shinozaki K."/>
        </authorList>
    </citation>
    <scope>NUCLEOTIDE SEQUENCE [LARGE SCALE MRNA] (ISOFORM 1)</scope>
    <source>
        <strain>cv. Columbia</strain>
    </source>
</reference>
<evidence type="ECO:0000250" key="1"/>
<evidence type="ECO:0000255" key="2"/>
<evidence type="ECO:0000255" key="3">
    <source>
        <dbReference type="PROSITE-ProRule" id="PRU00159"/>
    </source>
</evidence>
<evidence type="ECO:0000255" key="4">
    <source>
        <dbReference type="PROSITE-ProRule" id="PRU10027"/>
    </source>
</evidence>
<evidence type="ECO:0000256" key="5">
    <source>
        <dbReference type="SAM" id="MobiDB-lite"/>
    </source>
</evidence>
<evidence type="ECO:0000305" key="6"/>
<comment type="catalytic activity">
    <reaction>
        <text>L-seryl-[protein] + ATP = O-phospho-L-seryl-[protein] + ADP + H(+)</text>
        <dbReference type="Rhea" id="RHEA:17989"/>
        <dbReference type="Rhea" id="RHEA-COMP:9863"/>
        <dbReference type="Rhea" id="RHEA-COMP:11604"/>
        <dbReference type="ChEBI" id="CHEBI:15378"/>
        <dbReference type="ChEBI" id="CHEBI:29999"/>
        <dbReference type="ChEBI" id="CHEBI:30616"/>
        <dbReference type="ChEBI" id="CHEBI:83421"/>
        <dbReference type="ChEBI" id="CHEBI:456216"/>
        <dbReference type="EC" id="2.7.11.1"/>
    </reaction>
</comment>
<comment type="catalytic activity">
    <reaction>
        <text>L-threonyl-[protein] + ATP = O-phospho-L-threonyl-[protein] + ADP + H(+)</text>
        <dbReference type="Rhea" id="RHEA:46608"/>
        <dbReference type="Rhea" id="RHEA-COMP:11060"/>
        <dbReference type="Rhea" id="RHEA-COMP:11605"/>
        <dbReference type="ChEBI" id="CHEBI:15378"/>
        <dbReference type="ChEBI" id="CHEBI:30013"/>
        <dbReference type="ChEBI" id="CHEBI:30616"/>
        <dbReference type="ChEBI" id="CHEBI:61977"/>
        <dbReference type="ChEBI" id="CHEBI:456216"/>
        <dbReference type="EC" id="2.7.11.1"/>
    </reaction>
</comment>
<comment type="subcellular location">
    <subcellularLocation>
        <location evidence="1">Cell membrane</location>
        <topology evidence="1">Single-pass type I membrane protein</topology>
    </subcellularLocation>
</comment>
<comment type="alternative products">
    <event type="alternative splicing"/>
    <isoform>
        <id>Q9STJ8-1</id>
        <name>1</name>
        <sequence type="displayed"/>
    </isoform>
    <isoform>
        <id>Q9STJ8-2</id>
        <name>2</name>
        <sequence type="described" ref="VSP_040370"/>
    </isoform>
</comment>
<comment type="similarity">
    <text evidence="3">Belongs to the protein kinase superfamily. Ser/Thr protein kinase family.</text>
</comment>
<comment type="sequence caution" evidence="6">
    <conflict type="frameshift">
        <sequence resource="EMBL" id="AK229164"/>
    </conflict>
</comment>
<proteinExistence type="evidence at transcript level"/>
<protein>
    <recommendedName>
        <fullName>Receptor-like serine/threonine-protein kinase At4g25390</fullName>
        <ecNumber>2.7.11.1</ecNumber>
    </recommendedName>
</protein>
<sequence>MPSRSISAPVPVLAPAPIVSSLVPAAPSGHQNKTTRIFPPFVVAGAGAGFSLFITLSVCFCKFSRKRSSPPAENASSSPRRPSPREFSYSSLRRATGSFSQANRLGQGGFGVVFRGTISGGENVAVKVMDSGSLQGEGEFQNELFFAAKLDSPHVVPVIGFSHDRKRRRLLLVYKLMDNGNLQDALLHRRCPELMDWNRRFLVAVNIADGIKHLHSLEPPVIHGDIKPSNVLLDSLFSAKIADFGLARLKAEQVEISVAPERDGDGSMVEEVESVVTTVTGYEDFNFGLVDQSPESVAKVPGSVSASPEATTVVSVSPEMGEKTDEDGGSVVVMKKGKESESKDWWWKQESNVERGRVKEYVMQWIGSEVKKERPSRSDWIEAAALSSSSSKKLEKKTSKRLDWWLSLEEEDENKKKKKRRMVREWWKDEYRRELAKKRKKKKKMTLEAEFCSDDGSSSVSQWRRGSGSGSSIDWWLDGLSGERWLRARGNSHDSVSGEIAKSCGISSTPSMRGTVCYAAPEYCNLDNNVSEKCDVYSYGVLLLVLISGRRPLEMTGSASEIQRANLMSWARKLARRGKLVDLVDQKLQNLDQEQAVLCIKVALLCLQRLPISRPSMKEVLGMLKGEVNLPELPSEFSPSPPLKTTRKQRR</sequence>
<dbReference type="EC" id="2.7.11.1"/>
<dbReference type="EMBL" id="AL079350">
    <property type="protein sequence ID" value="CAB45516.1"/>
    <property type="molecule type" value="Genomic_DNA"/>
</dbReference>
<dbReference type="EMBL" id="AL161563">
    <property type="protein sequence ID" value="CAB81350.1"/>
    <property type="molecule type" value="Genomic_DNA"/>
</dbReference>
<dbReference type="EMBL" id="CP002687">
    <property type="protein sequence ID" value="AEE85051.1"/>
    <property type="molecule type" value="Genomic_DNA"/>
</dbReference>
<dbReference type="EMBL" id="CP002687">
    <property type="protein sequence ID" value="AEE85052.1"/>
    <property type="molecule type" value="Genomic_DNA"/>
</dbReference>
<dbReference type="EMBL" id="AK229164">
    <property type="status" value="NOT_ANNOTATED_CDS"/>
    <property type="molecule type" value="mRNA"/>
</dbReference>
<dbReference type="PIR" id="T10219">
    <property type="entry name" value="T10219"/>
</dbReference>
<dbReference type="RefSeq" id="NP_194269.1">
    <molecule id="Q9STJ8-1"/>
    <property type="nucleotide sequence ID" value="NM_118671.3"/>
</dbReference>
<dbReference type="RefSeq" id="NP_849442.1">
    <molecule id="Q9STJ8-2"/>
    <property type="nucleotide sequence ID" value="NM_179111.1"/>
</dbReference>
<dbReference type="SMR" id="Q9STJ8"/>
<dbReference type="BioGRID" id="13929">
    <property type="interactions" value="1"/>
</dbReference>
<dbReference type="FunCoup" id="Q9STJ8">
    <property type="interactions" value="17"/>
</dbReference>
<dbReference type="GlyGen" id="Q9STJ8">
    <property type="glycosylation" value="2 sites"/>
</dbReference>
<dbReference type="iPTMnet" id="Q9STJ8"/>
<dbReference type="PaxDb" id="3702-AT4G25390.1"/>
<dbReference type="ProteomicsDB" id="243000">
    <molecule id="Q9STJ8-1"/>
</dbReference>
<dbReference type="EnsemblPlants" id="AT4G25390.1">
    <molecule id="Q9STJ8-1"/>
    <property type="protein sequence ID" value="AT4G25390.1"/>
    <property type="gene ID" value="AT4G25390"/>
</dbReference>
<dbReference type="EnsemblPlants" id="AT4G25390.2">
    <molecule id="Q9STJ8-2"/>
    <property type="protein sequence ID" value="AT4G25390.2"/>
    <property type="gene ID" value="AT4G25390"/>
</dbReference>
<dbReference type="GeneID" id="828642"/>
<dbReference type="Gramene" id="AT4G25390.1">
    <molecule id="Q9STJ8-1"/>
    <property type="protein sequence ID" value="AT4G25390.1"/>
    <property type="gene ID" value="AT4G25390"/>
</dbReference>
<dbReference type="Gramene" id="AT4G25390.2">
    <molecule id="Q9STJ8-2"/>
    <property type="protein sequence ID" value="AT4G25390.2"/>
    <property type="gene ID" value="AT4G25390"/>
</dbReference>
<dbReference type="KEGG" id="ath:AT4G25390"/>
<dbReference type="Araport" id="AT4G25390"/>
<dbReference type="TAIR" id="AT4G25390"/>
<dbReference type="eggNOG" id="KOG1187">
    <property type="taxonomic scope" value="Eukaryota"/>
</dbReference>
<dbReference type="HOGENOM" id="CLU_011728_0_0_1"/>
<dbReference type="InParanoid" id="Q9STJ8"/>
<dbReference type="OMA" id="SHTPREF"/>
<dbReference type="PhylomeDB" id="Q9STJ8"/>
<dbReference type="PRO" id="PR:Q9STJ8"/>
<dbReference type="Proteomes" id="UP000006548">
    <property type="component" value="Chromosome 4"/>
</dbReference>
<dbReference type="ExpressionAtlas" id="Q9STJ8">
    <property type="expression patterns" value="baseline and differential"/>
</dbReference>
<dbReference type="GO" id="GO:0005886">
    <property type="term" value="C:plasma membrane"/>
    <property type="evidence" value="ECO:0007669"/>
    <property type="project" value="UniProtKB-SubCell"/>
</dbReference>
<dbReference type="GO" id="GO:0005524">
    <property type="term" value="F:ATP binding"/>
    <property type="evidence" value="ECO:0007669"/>
    <property type="project" value="UniProtKB-KW"/>
</dbReference>
<dbReference type="GO" id="GO:0106310">
    <property type="term" value="F:protein serine kinase activity"/>
    <property type="evidence" value="ECO:0007669"/>
    <property type="project" value="RHEA"/>
</dbReference>
<dbReference type="GO" id="GO:0004674">
    <property type="term" value="F:protein serine/threonine kinase activity"/>
    <property type="evidence" value="ECO:0007669"/>
    <property type="project" value="UniProtKB-KW"/>
</dbReference>
<dbReference type="FunFam" id="3.30.200.20:FF:000542">
    <property type="entry name" value="Receptor-like serine/threonine-protein kinase At4g25390"/>
    <property type="match status" value="1"/>
</dbReference>
<dbReference type="Gene3D" id="3.30.200.20">
    <property type="entry name" value="Phosphorylase Kinase, domain 1"/>
    <property type="match status" value="1"/>
</dbReference>
<dbReference type="Gene3D" id="1.10.510.10">
    <property type="entry name" value="Transferase(Phosphotransferase) domain 1"/>
    <property type="match status" value="2"/>
</dbReference>
<dbReference type="InterPro" id="IPR044576">
    <property type="entry name" value="At4g25390-like"/>
</dbReference>
<dbReference type="InterPro" id="IPR011009">
    <property type="entry name" value="Kinase-like_dom_sf"/>
</dbReference>
<dbReference type="InterPro" id="IPR000719">
    <property type="entry name" value="Prot_kinase_dom"/>
</dbReference>
<dbReference type="InterPro" id="IPR017441">
    <property type="entry name" value="Protein_kinase_ATP_BS"/>
</dbReference>
<dbReference type="InterPro" id="IPR001245">
    <property type="entry name" value="Ser-Thr/Tyr_kinase_cat_dom"/>
</dbReference>
<dbReference type="InterPro" id="IPR008271">
    <property type="entry name" value="Ser/Thr_kinase_AS"/>
</dbReference>
<dbReference type="PANTHER" id="PTHR46821">
    <property type="entry name" value="OS07G0586332 PROTEIN"/>
    <property type="match status" value="1"/>
</dbReference>
<dbReference type="PANTHER" id="PTHR46821:SF5">
    <property type="entry name" value="PROTEIN KINASE DOMAIN-CONTAINING PROTEIN"/>
    <property type="match status" value="1"/>
</dbReference>
<dbReference type="Pfam" id="PF07714">
    <property type="entry name" value="PK_Tyr_Ser-Thr"/>
    <property type="match status" value="1"/>
</dbReference>
<dbReference type="Pfam" id="PF00069">
    <property type="entry name" value="Pkinase"/>
    <property type="match status" value="1"/>
</dbReference>
<dbReference type="SMART" id="SM00220">
    <property type="entry name" value="S_TKc"/>
    <property type="match status" value="1"/>
</dbReference>
<dbReference type="SUPFAM" id="SSF56112">
    <property type="entry name" value="Protein kinase-like (PK-like)"/>
    <property type="match status" value="1"/>
</dbReference>
<dbReference type="PROSITE" id="PS00107">
    <property type="entry name" value="PROTEIN_KINASE_ATP"/>
    <property type="match status" value="1"/>
</dbReference>
<dbReference type="PROSITE" id="PS50011">
    <property type="entry name" value="PROTEIN_KINASE_DOM"/>
    <property type="match status" value="1"/>
</dbReference>
<dbReference type="PROSITE" id="PS00108">
    <property type="entry name" value="PROTEIN_KINASE_ST"/>
    <property type="match status" value="1"/>
</dbReference>
<name>Y4539_ARATH</name>
<keyword id="KW-0025">Alternative splicing</keyword>
<keyword id="KW-0067">ATP-binding</keyword>
<keyword id="KW-1003">Cell membrane</keyword>
<keyword id="KW-0325">Glycoprotein</keyword>
<keyword id="KW-0418">Kinase</keyword>
<keyword id="KW-0472">Membrane</keyword>
<keyword id="KW-0547">Nucleotide-binding</keyword>
<keyword id="KW-0675">Receptor</keyword>
<keyword id="KW-1185">Reference proteome</keyword>
<keyword id="KW-0723">Serine/threonine-protein kinase</keyword>
<keyword id="KW-0732">Signal</keyword>
<keyword id="KW-0808">Transferase</keyword>
<keyword id="KW-0812">Transmembrane</keyword>
<keyword id="KW-1133">Transmembrane helix</keyword>
<gene>
    <name type="ordered locus">At4g25390</name>
    <name type="ORF">T30C3.60</name>
</gene>
<feature type="signal peptide" evidence="2">
    <location>
        <begin position="1"/>
        <end position="25"/>
    </location>
</feature>
<feature type="chain" id="PRO_0000403342" description="Receptor-like serine/threonine-protein kinase At4g25390">
    <location>
        <begin position="26"/>
        <end position="651"/>
    </location>
</feature>
<feature type="topological domain" description="Extracellular" evidence="2">
    <location>
        <begin position="26"/>
        <end position="40"/>
    </location>
</feature>
<feature type="transmembrane region" description="Helical" evidence="2">
    <location>
        <begin position="41"/>
        <end position="61"/>
    </location>
</feature>
<feature type="topological domain" description="Cytoplasmic" evidence="2">
    <location>
        <begin position="62"/>
        <end position="651"/>
    </location>
</feature>
<feature type="domain" description="Protein kinase" evidence="3">
    <location>
        <begin position="99"/>
        <end position="633"/>
    </location>
</feature>
<feature type="region of interest" description="Disordered" evidence="5">
    <location>
        <begin position="66"/>
        <end position="87"/>
    </location>
</feature>
<feature type="compositionally biased region" description="Low complexity" evidence="5">
    <location>
        <begin position="69"/>
        <end position="87"/>
    </location>
</feature>
<feature type="active site" description="Proton acceptor" evidence="3 4">
    <location>
        <position position="225"/>
    </location>
</feature>
<feature type="binding site" evidence="3">
    <location>
        <begin position="105"/>
        <end position="113"/>
    </location>
    <ligand>
        <name>ATP</name>
        <dbReference type="ChEBI" id="CHEBI:30616"/>
    </ligand>
</feature>
<feature type="binding site" evidence="3">
    <location>
        <position position="127"/>
    </location>
    <ligand>
        <name>ATP</name>
        <dbReference type="ChEBI" id="CHEBI:30616"/>
    </ligand>
</feature>
<feature type="glycosylation site" description="N-linked (GlcNAc...) asparagine" evidence="2">
    <location>
        <position position="32"/>
    </location>
</feature>
<feature type="splice variant" id="VSP_040370" description="In isoform 2." evidence="6">
    <original>RGSGSGSSIDWWLDGLSGERWLRARGNSHDSVSGEIAKSCGISSTPSMRGTVCYAAPEYCNLDNNVSEKCDVYSYGVLLLVLISGRRPLEMTGSASEIQRANLMSWARKLARRGKLVDLVDQKLQNLDQEQAVLCIKVALLCLQRLPISRPSMKE</original>
    <variation>Q</variation>
    <location>
        <begin position="465"/>
        <end position="619"/>
    </location>
</feature>
<feature type="sequence conflict" description="In Ref. 3; AK229164." evidence="6" ref="3">
    <original>W</original>
    <variation>G</variation>
    <location>
        <position position="405"/>
    </location>
</feature>